<organism>
    <name type="scientific">Buchnera aphidicola subsp. Acyrthosiphon pisum (strain APS)</name>
    <name type="common">Acyrthosiphon pisum symbiotic bacterium</name>
    <dbReference type="NCBI Taxonomy" id="107806"/>
    <lineage>
        <taxon>Bacteria</taxon>
        <taxon>Pseudomonadati</taxon>
        <taxon>Pseudomonadota</taxon>
        <taxon>Gammaproteobacteria</taxon>
        <taxon>Enterobacterales</taxon>
        <taxon>Erwiniaceae</taxon>
        <taxon>Buchnera</taxon>
    </lineage>
</organism>
<keyword id="KW-0030">Aminoacyl-tRNA synthetase</keyword>
<keyword id="KW-0067">ATP-binding</keyword>
<keyword id="KW-0963">Cytoplasm</keyword>
<keyword id="KW-0436">Ligase</keyword>
<keyword id="KW-0479">Metal-binding</keyword>
<keyword id="KW-0547">Nucleotide-binding</keyword>
<keyword id="KW-0648">Protein biosynthesis</keyword>
<keyword id="KW-1185">Reference proteome</keyword>
<keyword id="KW-0694">RNA-binding</keyword>
<keyword id="KW-0820">tRNA-binding</keyword>
<keyword id="KW-0862">Zinc</keyword>
<feature type="chain" id="PRO_0000075078" description="Alanine--tRNA ligase">
    <location>
        <begin position="1"/>
        <end position="878"/>
    </location>
</feature>
<feature type="binding site" evidence="1">
    <location>
        <position position="564"/>
    </location>
    <ligand>
        <name>Zn(2+)</name>
        <dbReference type="ChEBI" id="CHEBI:29105"/>
    </ligand>
</feature>
<feature type="binding site" evidence="1">
    <location>
        <position position="568"/>
    </location>
    <ligand>
        <name>Zn(2+)</name>
        <dbReference type="ChEBI" id="CHEBI:29105"/>
    </ligand>
</feature>
<feature type="binding site" evidence="1">
    <location>
        <position position="666"/>
    </location>
    <ligand>
        <name>Zn(2+)</name>
        <dbReference type="ChEBI" id="CHEBI:29105"/>
    </ligand>
</feature>
<feature type="binding site" evidence="1">
    <location>
        <position position="670"/>
    </location>
    <ligand>
        <name>Zn(2+)</name>
        <dbReference type="ChEBI" id="CHEBI:29105"/>
    </ligand>
</feature>
<comment type="function">
    <text evidence="1">Catalyzes the attachment of alanine to tRNA(Ala) in a two-step reaction: alanine is first activated by ATP to form Ala-AMP and then transferred to the acceptor end of tRNA(Ala). Also edits incorrectly charged Ser-tRNA(Ala) and Gly-tRNA(Ala) via its editing domain.</text>
</comment>
<comment type="catalytic activity">
    <reaction evidence="1">
        <text>tRNA(Ala) + L-alanine + ATP = L-alanyl-tRNA(Ala) + AMP + diphosphate</text>
        <dbReference type="Rhea" id="RHEA:12540"/>
        <dbReference type="Rhea" id="RHEA-COMP:9657"/>
        <dbReference type="Rhea" id="RHEA-COMP:9923"/>
        <dbReference type="ChEBI" id="CHEBI:30616"/>
        <dbReference type="ChEBI" id="CHEBI:33019"/>
        <dbReference type="ChEBI" id="CHEBI:57972"/>
        <dbReference type="ChEBI" id="CHEBI:78442"/>
        <dbReference type="ChEBI" id="CHEBI:78497"/>
        <dbReference type="ChEBI" id="CHEBI:456215"/>
        <dbReference type="EC" id="6.1.1.7"/>
    </reaction>
</comment>
<comment type="cofactor">
    <cofactor evidence="1">
        <name>Zn(2+)</name>
        <dbReference type="ChEBI" id="CHEBI:29105"/>
    </cofactor>
    <text evidence="1">Binds 1 zinc ion per subunit.</text>
</comment>
<comment type="subunit">
    <text evidence="1">Homotetramer.</text>
</comment>
<comment type="subcellular location">
    <subcellularLocation>
        <location evidence="1">Cytoplasm</location>
    </subcellularLocation>
</comment>
<comment type="domain">
    <text evidence="1">Consists of three domains; the N-terminal catalytic domain, the editing domain and the C-terminal C-Ala domain. The editing domain removes incorrectly charged amino acids, while the C-Ala domain, along with tRNA(Ala), serves as a bridge to cooperatively bring together the editing and aminoacylation centers thus stimulating deacylation of misacylated tRNAs.</text>
</comment>
<comment type="similarity">
    <text evidence="1">Belongs to the class-II aminoacyl-tRNA synthetase family.</text>
</comment>
<protein>
    <recommendedName>
        <fullName evidence="1">Alanine--tRNA ligase</fullName>
        <ecNumber evidence="1">6.1.1.7</ecNumber>
    </recommendedName>
    <alternativeName>
        <fullName evidence="1">Alanyl-tRNA synthetase</fullName>
        <shortName evidence="1">AlaRS</shortName>
    </alternativeName>
</protein>
<proteinExistence type="inferred from homology"/>
<reference key="1">
    <citation type="journal article" date="2000" name="Nature">
        <title>Genome sequence of the endocellular bacterial symbiont of aphids Buchnera sp. APS.</title>
        <authorList>
            <person name="Shigenobu S."/>
            <person name="Watanabe H."/>
            <person name="Hattori M."/>
            <person name="Sakaki Y."/>
            <person name="Ishikawa H."/>
        </authorList>
    </citation>
    <scope>NUCLEOTIDE SEQUENCE [LARGE SCALE GENOMIC DNA]</scope>
    <source>
        <strain>APS</strain>
    </source>
</reference>
<accession>P57483</accession>
<sequence>MKKTTDKIRQDFLKFFKEKGHMIIPSSSLVPYNDSTLLFTNAGMNQFKEIFLGEKKSNYPRVATVQRCLRTGGKHNDLENVGYTSKHHTFFEMLGNFSFGDYFKKQAIEYAWELLTSKKWFNIPQNKLWISVYKDDTETYKIWNDIIKIPSERIIRIGDKNKEKYNSENFWQMGDTGPCGPCTEIFYDYSDTMKIDPIEFLENKNGRFVEIWNIVFIEFNRISKTKIISLKNKSIDTGMGLERISAVLQNVYSNYHIDVFQKLIKNIAQLSSINNLDHISFQVIADHIRSCSYIIADNILPSNEHRGYILRRIIRRALRHGHKIGIKKNFFHKLVSSVIHVMGKTGDILKEKQEKIENVLKIEEMQFSYTLEKGLKILNSEIEKIDNNILSGKTAFYLYDTFGFPIDLTSDVCREKNIKIDYNSYELAKEKQKEQSNINKKFYKNYNNNIILNDTCIFEGYTKTITRSLVKYIFVNNQSVSKIIKDEKGVIFLDKTPFYSESGGQIGDIGQLYHKKSSFLVEKTKKYGKTIGHIGKLISGQITLNDSLFSHIDEDYRYAIQLNHSATHLLHATLRKILGDSIVQKGSLVTNTYLRFDFSYVKSIDTSQIQKIENIINTNIRNNIKIKTEELNLEEAKKKKAMALFDDQYGSIVRVVFINNFSIELCGGTHTQRTGDIGLFKIISQSSVASGIKRIEAVTGQKAIDYLHEKDNYIKDISLLLNCSTVDIKEKTKKLTIKTKNLEKKIIQLQKKENTQYIKKILKNVTEIKGTKLLTNIFYDYEQKSLRMIVDQLKKELKNTIIILINIINNRFTIIVGVTRNLLDYITAIKIMEMIINKTNGKGGGKKEIAEGGGANTKQLPSILNTIKLWINDKLNEK</sequence>
<dbReference type="EC" id="6.1.1.7" evidence="1"/>
<dbReference type="EMBL" id="BA000003">
    <property type="protein sequence ID" value="BAB13106.1"/>
    <property type="molecule type" value="Genomic_DNA"/>
</dbReference>
<dbReference type="RefSeq" id="NP_240220.1">
    <property type="nucleotide sequence ID" value="NC_002528.1"/>
</dbReference>
<dbReference type="RefSeq" id="WP_010896100.1">
    <property type="nucleotide sequence ID" value="NC_002528.1"/>
</dbReference>
<dbReference type="SMR" id="P57483"/>
<dbReference type="STRING" id="563178.BUAP5A_396"/>
<dbReference type="EnsemblBacteria" id="BAB13106">
    <property type="protein sequence ID" value="BAB13106"/>
    <property type="gene ID" value="BAB13106"/>
</dbReference>
<dbReference type="KEGG" id="buc:BU403"/>
<dbReference type="PATRIC" id="fig|107806.10.peg.417"/>
<dbReference type="eggNOG" id="COG0013">
    <property type="taxonomic scope" value="Bacteria"/>
</dbReference>
<dbReference type="HOGENOM" id="CLU_004485_1_1_6"/>
<dbReference type="Proteomes" id="UP000001806">
    <property type="component" value="Chromosome"/>
</dbReference>
<dbReference type="GO" id="GO:0005829">
    <property type="term" value="C:cytosol"/>
    <property type="evidence" value="ECO:0007669"/>
    <property type="project" value="TreeGrafter"/>
</dbReference>
<dbReference type="GO" id="GO:0004813">
    <property type="term" value="F:alanine-tRNA ligase activity"/>
    <property type="evidence" value="ECO:0007669"/>
    <property type="project" value="UniProtKB-UniRule"/>
</dbReference>
<dbReference type="GO" id="GO:0002161">
    <property type="term" value="F:aminoacyl-tRNA deacylase activity"/>
    <property type="evidence" value="ECO:0007669"/>
    <property type="project" value="TreeGrafter"/>
</dbReference>
<dbReference type="GO" id="GO:0005524">
    <property type="term" value="F:ATP binding"/>
    <property type="evidence" value="ECO:0007669"/>
    <property type="project" value="UniProtKB-UniRule"/>
</dbReference>
<dbReference type="GO" id="GO:0000049">
    <property type="term" value="F:tRNA binding"/>
    <property type="evidence" value="ECO:0007669"/>
    <property type="project" value="UniProtKB-KW"/>
</dbReference>
<dbReference type="GO" id="GO:0008270">
    <property type="term" value="F:zinc ion binding"/>
    <property type="evidence" value="ECO:0007669"/>
    <property type="project" value="UniProtKB-UniRule"/>
</dbReference>
<dbReference type="GO" id="GO:0006419">
    <property type="term" value="P:alanyl-tRNA aminoacylation"/>
    <property type="evidence" value="ECO:0007669"/>
    <property type="project" value="UniProtKB-UniRule"/>
</dbReference>
<dbReference type="GO" id="GO:0045892">
    <property type="term" value="P:negative regulation of DNA-templated transcription"/>
    <property type="evidence" value="ECO:0007669"/>
    <property type="project" value="TreeGrafter"/>
</dbReference>
<dbReference type="CDD" id="cd00673">
    <property type="entry name" value="AlaRS_core"/>
    <property type="match status" value="1"/>
</dbReference>
<dbReference type="FunFam" id="2.40.30.130:FF:000001">
    <property type="entry name" value="Alanine--tRNA ligase"/>
    <property type="match status" value="1"/>
</dbReference>
<dbReference type="FunFam" id="3.10.310.40:FF:000001">
    <property type="entry name" value="Alanine--tRNA ligase"/>
    <property type="match status" value="1"/>
</dbReference>
<dbReference type="FunFam" id="3.30.54.20:FF:000001">
    <property type="entry name" value="Alanine--tRNA ligase"/>
    <property type="match status" value="1"/>
</dbReference>
<dbReference type="FunFam" id="3.30.930.10:FF:000004">
    <property type="entry name" value="Alanine--tRNA ligase"/>
    <property type="match status" value="1"/>
</dbReference>
<dbReference type="FunFam" id="3.30.980.10:FF:000004">
    <property type="entry name" value="Alanine--tRNA ligase, cytoplasmic"/>
    <property type="match status" value="1"/>
</dbReference>
<dbReference type="Gene3D" id="2.40.30.130">
    <property type="match status" value="1"/>
</dbReference>
<dbReference type="Gene3D" id="3.10.310.40">
    <property type="match status" value="1"/>
</dbReference>
<dbReference type="Gene3D" id="3.30.54.20">
    <property type="match status" value="1"/>
</dbReference>
<dbReference type="Gene3D" id="6.10.250.550">
    <property type="match status" value="1"/>
</dbReference>
<dbReference type="Gene3D" id="3.30.930.10">
    <property type="entry name" value="Bira Bifunctional Protein, Domain 2"/>
    <property type="match status" value="1"/>
</dbReference>
<dbReference type="Gene3D" id="3.30.980.10">
    <property type="entry name" value="Threonyl-trna Synthetase, Chain A, domain 2"/>
    <property type="match status" value="1"/>
</dbReference>
<dbReference type="HAMAP" id="MF_00036_B">
    <property type="entry name" value="Ala_tRNA_synth_B"/>
    <property type="match status" value="1"/>
</dbReference>
<dbReference type="InterPro" id="IPR045864">
    <property type="entry name" value="aa-tRNA-synth_II/BPL/LPL"/>
</dbReference>
<dbReference type="InterPro" id="IPR002318">
    <property type="entry name" value="Ala-tRNA-lgiase_IIc"/>
</dbReference>
<dbReference type="InterPro" id="IPR018162">
    <property type="entry name" value="Ala-tRNA-ligase_IIc_anticod-bd"/>
</dbReference>
<dbReference type="InterPro" id="IPR018165">
    <property type="entry name" value="Ala-tRNA-synth_IIc_core"/>
</dbReference>
<dbReference type="InterPro" id="IPR018164">
    <property type="entry name" value="Ala-tRNA-synth_IIc_N"/>
</dbReference>
<dbReference type="InterPro" id="IPR050058">
    <property type="entry name" value="Ala-tRNA_ligase"/>
</dbReference>
<dbReference type="InterPro" id="IPR023033">
    <property type="entry name" value="Ala_tRNA_ligase_euk/bac"/>
</dbReference>
<dbReference type="InterPro" id="IPR003156">
    <property type="entry name" value="DHHA1_dom"/>
</dbReference>
<dbReference type="InterPro" id="IPR018163">
    <property type="entry name" value="Thr/Ala-tRNA-synth_IIc_edit"/>
</dbReference>
<dbReference type="InterPro" id="IPR009000">
    <property type="entry name" value="Transl_B-barrel_sf"/>
</dbReference>
<dbReference type="InterPro" id="IPR012947">
    <property type="entry name" value="tRNA_SAD"/>
</dbReference>
<dbReference type="NCBIfam" id="TIGR00344">
    <property type="entry name" value="alaS"/>
    <property type="match status" value="1"/>
</dbReference>
<dbReference type="PANTHER" id="PTHR11777:SF9">
    <property type="entry name" value="ALANINE--TRNA LIGASE, CYTOPLASMIC"/>
    <property type="match status" value="1"/>
</dbReference>
<dbReference type="PANTHER" id="PTHR11777">
    <property type="entry name" value="ALANYL-TRNA SYNTHETASE"/>
    <property type="match status" value="1"/>
</dbReference>
<dbReference type="Pfam" id="PF02272">
    <property type="entry name" value="DHHA1"/>
    <property type="match status" value="1"/>
</dbReference>
<dbReference type="Pfam" id="PF01411">
    <property type="entry name" value="tRNA-synt_2c"/>
    <property type="match status" value="1"/>
</dbReference>
<dbReference type="Pfam" id="PF07973">
    <property type="entry name" value="tRNA_SAD"/>
    <property type="match status" value="1"/>
</dbReference>
<dbReference type="PRINTS" id="PR00980">
    <property type="entry name" value="TRNASYNTHALA"/>
</dbReference>
<dbReference type="SMART" id="SM00863">
    <property type="entry name" value="tRNA_SAD"/>
    <property type="match status" value="1"/>
</dbReference>
<dbReference type="SUPFAM" id="SSF55681">
    <property type="entry name" value="Class II aaRS and biotin synthetases"/>
    <property type="match status" value="1"/>
</dbReference>
<dbReference type="SUPFAM" id="SSF101353">
    <property type="entry name" value="Putative anticodon-binding domain of alanyl-tRNA synthetase (AlaRS)"/>
    <property type="match status" value="1"/>
</dbReference>
<dbReference type="SUPFAM" id="SSF55186">
    <property type="entry name" value="ThrRS/AlaRS common domain"/>
    <property type="match status" value="1"/>
</dbReference>
<dbReference type="SUPFAM" id="SSF50447">
    <property type="entry name" value="Translation proteins"/>
    <property type="match status" value="1"/>
</dbReference>
<dbReference type="PROSITE" id="PS50860">
    <property type="entry name" value="AA_TRNA_LIGASE_II_ALA"/>
    <property type="match status" value="1"/>
</dbReference>
<name>SYA_BUCAI</name>
<gene>
    <name evidence="1" type="primary">alaS</name>
    <name type="ordered locus">BU403</name>
</gene>
<evidence type="ECO:0000255" key="1">
    <source>
        <dbReference type="HAMAP-Rule" id="MF_00036"/>
    </source>
</evidence>